<evidence type="ECO:0000255" key="1">
    <source>
        <dbReference type="HAMAP-Rule" id="MF_01006"/>
    </source>
</evidence>
<reference key="1">
    <citation type="submission" date="2007-05" db="EMBL/GenBank/DDBJ databases">
        <title>Complete sequence of chromosome of Psychrobacter sp. PRwf-1.</title>
        <authorList>
            <consortium name="US DOE Joint Genome Institute"/>
            <person name="Copeland A."/>
            <person name="Lucas S."/>
            <person name="Lapidus A."/>
            <person name="Barry K."/>
            <person name="Detter J.C."/>
            <person name="Glavina del Rio T."/>
            <person name="Hammon N."/>
            <person name="Israni S."/>
            <person name="Dalin E."/>
            <person name="Tice H."/>
            <person name="Pitluck S."/>
            <person name="Chain P."/>
            <person name="Malfatti S."/>
            <person name="Shin M."/>
            <person name="Vergez L."/>
            <person name="Schmutz J."/>
            <person name="Larimer F."/>
            <person name="Land M."/>
            <person name="Hauser L."/>
            <person name="Kyrpides N."/>
            <person name="Kim E."/>
            <person name="Tiedje J."/>
            <person name="Richardson P."/>
        </authorList>
    </citation>
    <scope>NUCLEOTIDE SEQUENCE [LARGE SCALE GENOMIC DNA]</scope>
    <source>
        <strain>PRwf-1</strain>
    </source>
</reference>
<gene>
    <name evidence="1" type="primary">uppP</name>
    <name type="ordered locus">PsycPRwf_0541</name>
</gene>
<sequence>MDLLLILKAVIMGIVEGITEFLPISSTGYLILSADLMSFWTKEKADLFIVVIQLGAILAVIYEYWGRLWHALMGLITGKSEGPNALKNPRQLGLSLIVATIPVMLVGFTLADQIKEYLFNPYTVAIMLILGGLLIFYVERKQIPVIAEEAEDVSLKTALLIGLMQCLALIPGTSRSGSTIIGALWLGVSRKAAAEFSFFLGIPVIIGAGLLDLLKHKDVLSSGQDWLILGVGVLVSFVVGLLCIRWLVDWVSRRDFTIFAWLRIITGIIVLLVAWIFGYTIQG</sequence>
<keyword id="KW-0046">Antibiotic resistance</keyword>
<keyword id="KW-0997">Cell inner membrane</keyword>
<keyword id="KW-1003">Cell membrane</keyword>
<keyword id="KW-0133">Cell shape</keyword>
<keyword id="KW-0961">Cell wall biogenesis/degradation</keyword>
<keyword id="KW-0378">Hydrolase</keyword>
<keyword id="KW-0472">Membrane</keyword>
<keyword id="KW-0573">Peptidoglycan synthesis</keyword>
<keyword id="KW-0812">Transmembrane</keyword>
<keyword id="KW-1133">Transmembrane helix</keyword>
<proteinExistence type="inferred from homology"/>
<feature type="chain" id="PRO_1000072895" description="Undecaprenyl-diphosphatase">
    <location>
        <begin position="1"/>
        <end position="283"/>
    </location>
</feature>
<feature type="transmembrane region" description="Helical" evidence="1">
    <location>
        <begin position="4"/>
        <end position="24"/>
    </location>
</feature>
<feature type="transmembrane region" description="Helical" evidence="1">
    <location>
        <begin position="45"/>
        <end position="65"/>
    </location>
</feature>
<feature type="transmembrane region" description="Helical" evidence="1">
    <location>
        <begin position="91"/>
        <end position="111"/>
    </location>
</feature>
<feature type="transmembrane region" description="Helical" evidence="1">
    <location>
        <begin position="118"/>
        <end position="138"/>
    </location>
</feature>
<feature type="transmembrane region" description="Helical" evidence="1">
    <location>
        <begin position="153"/>
        <end position="173"/>
    </location>
</feature>
<feature type="transmembrane region" description="Helical" evidence="1">
    <location>
        <begin position="194"/>
        <end position="214"/>
    </location>
</feature>
<feature type="transmembrane region" description="Helical" evidence="1">
    <location>
        <begin position="228"/>
        <end position="248"/>
    </location>
</feature>
<feature type="transmembrane region" description="Helical" evidence="1">
    <location>
        <begin position="258"/>
        <end position="278"/>
    </location>
</feature>
<comment type="function">
    <text evidence="1">Catalyzes the dephosphorylation of undecaprenyl diphosphate (UPP). Confers resistance to bacitracin.</text>
</comment>
<comment type="catalytic activity">
    <reaction evidence="1">
        <text>di-trans,octa-cis-undecaprenyl diphosphate + H2O = di-trans,octa-cis-undecaprenyl phosphate + phosphate + H(+)</text>
        <dbReference type="Rhea" id="RHEA:28094"/>
        <dbReference type="ChEBI" id="CHEBI:15377"/>
        <dbReference type="ChEBI" id="CHEBI:15378"/>
        <dbReference type="ChEBI" id="CHEBI:43474"/>
        <dbReference type="ChEBI" id="CHEBI:58405"/>
        <dbReference type="ChEBI" id="CHEBI:60392"/>
        <dbReference type="EC" id="3.6.1.27"/>
    </reaction>
</comment>
<comment type="subcellular location">
    <subcellularLocation>
        <location evidence="1">Cell inner membrane</location>
        <topology evidence="1">Multi-pass membrane protein</topology>
    </subcellularLocation>
</comment>
<comment type="miscellaneous">
    <text>Bacitracin is thought to be involved in the inhibition of peptidoglycan synthesis by sequestering undecaprenyl diphosphate, thereby reducing the pool of lipid carrier available.</text>
</comment>
<comment type="similarity">
    <text evidence="1">Belongs to the UppP family.</text>
</comment>
<name>UPPP_PSYWF</name>
<dbReference type="EC" id="3.6.1.27" evidence="1"/>
<dbReference type="EMBL" id="CP000713">
    <property type="protein sequence ID" value="ABQ93496.1"/>
    <property type="molecule type" value="Genomic_DNA"/>
</dbReference>
<dbReference type="SMR" id="A5WCV5"/>
<dbReference type="STRING" id="349106.PsycPRwf_0541"/>
<dbReference type="KEGG" id="prw:PsycPRwf_0541"/>
<dbReference type="eggNOG" id="COG1968">
    <property type="taxonomic scope" value="Bacteria"/>
</dbReference>
<dbReference type="HOGENOM" id="CLU_060296_2_0_6"/>
<dbReference type="GO" id="GO:0005886">
    <property type="term" value="C:plasma membrane"/>
    <property type="evidence" value="ECO:0007669"/>
    <property type="project" value="UniProtKB-SubCell"/>
</dbReference>
<dbReference type="GO" id="GO:0050380">
    <property type="term" value="F:undecaprenyl-diphosphatase activity"/>
    <property type="evidence" value="ECO:0007669"/>
    <property type="project" value="UniProtKB-UniRule"/>
</dbReference>
<dbReference type="GO" id="GO:0071555">
    <property type="term" value="P:cell wall organization"/>
    <property type="evidence" value="ECO:0007669"/>
    <property type="project" value="UniProtKB-KW"/>
</dbReference>
<dbReference type="GO" id="GO:0009252">
    <property type="term" value="P:peptidoglycan biosynthetic process"/>
    <property type="evidence" value="ECO:0007669"/>
    <property type="project" value="UniProtKB-KW"/>
</dbReference>
<dbReference type="GO" id="GO:0008360">
    <property type="term" value="P:regulation of cell shape"/>
    <property type="evidence" value="ECO:0007669"/>
    <property type="project" value="UniProtKB-KW"/>
</dbReference>
<dbReference type="GO" id="GO:0046677">
    <property type="term" value="P:response to antibiotic"/>
    <property type="evidence" value="ECO:0007669"/>
    <property type="project" value="UniProtKB-UniRule"/>
</dbReference>
<dbReference type="HAMAP" id="MF_01006">
    <property type="entry name" value="Undec_diphosphatase"/>
    <property type="match status" value="1"/>
</dbReference>
<dbReference type="InterPro" id="IPR003824">
    <property type="entry name" value="UppP"/>
</dbReference>
<dbReference type="NCBIfam" id="NF001389">
    <property type="entry name" value="PRK00281.1-2"/>
    <property type="match status" value="1"/>
</dbReference>
<dbReference type="NCBIfam" id="NF001390">
    <property type="entry name" value="PRK00281.1-4"/>
    <property type="match status" value="1"/>
</dbReference>
<dbReference type="NCBIfam" id="TIGR00753">
    <property type="entry name" value="undec_PP_bacA"/>
    <property type="match status" value="1"/>
</dbReference>
<dbReference type="PANTHER" id="PTHR30622">
    <property type="entry name" value="UNDECAPRENYL-DIPHOSPHATASE"/>
    <property type="match status" value="1"/>
</dbReference>
<dbReference type="PANTHER" id="PTHR30622:SF3">
    <property type="entry name" value="UNDECAPRENYL-DIPHOSPHATASE"/>
    <property type="match status" value="1"/>
</dbReference>
<dbReference type="Pfam" id="PF02673">
    <property type="entry name" value="BacA"/>
    <property type="match status" value="1"/>
</dbReference>
<organism>
    <name type="scientific">Psychrobacter sp. (strain PRwf-1)</name>
    <dbReference type="NCBI Taxonomy" id="349106"/>
    <lineage>
        <taxon>Bacteria</taxon>
        <taxon>Pseudomonadati</taxon>
        <taxon>Pseudomonadota</taxon>
        <taxon>Gammaproteobacteria</taxon>
        <taxon>Moraxellales</taxon>
        <taxon>Moraxellaceae</taxon>
        <taxon>Psychrobacter</taxon>
    </lineage>
</organism>
<protein>
    <recommendedName>
        <fullName evidence="1">Undecaprenyl-diphosphatase</fullName>
        <ecNumber evidence="1">3.6.1.27</ecNumber>
    </recommendedName>
    <alternativeName>
        <fullName evidence="1">Bacitracin resistance protein</fullName>
    </alternativeName>
    <alternativeName>
        <fullName evidence="1">Undecaprenyl pyrophosphate phosphatase</fullName>
    </alternativeName>
</protein>
<accession>A5WCV5</accession>